<accession>C4KJ66</accession>
<name>Y2028_SACI6</name>
<organism>
    <name type="scientific">Saccharolobus islandicus (strain M.16.4 / Kamchatka #3)</name>
    <name type="common">Sulfolobus islandicus</name>
    <dbReference type="NCBI Taxonomy" id="426118"/>
    <lineage>
        <taxon>Archaea</taxon>
        <taxon>Thermoproteota</taxon>
        <taxon>Thermoprotei</taxon>
        <taxon>Sulfolobales</taxon>
        <taxon>Sulfolobaceae</taxon>
        <taxon>Saccharolobus</taxon>
    </lineage>
</organism>
<proteinExistence type="inferred from homology"/>
<protein>
    <recommendedName>
        <fullName evidence="1">Protein M164_2028</fullName>
    </recommendedName>
</protein>
<dbReference type="EMBL" id="CP001402">
    <property type="protein sequence ID" value="ACR42630.1"/>
    <property type="molecule type" value="Genomic_DNA"/>
</dbReference>
<dbReference type="RefSeq" id="WP_012711988.1">
    <property type="nucleotide sequence ID" value="NC_012726.1"/>
</dbReference>
<dbReference type="SMR" id="C4KJ66"/>
<dbReference type="GeneID" id="84062332"/>
<dbReference type="KEGG" id="sid:M164_2028"/>
<dbReference type="HOGENOM" id="CLU_030805_0_5_2"/>
<dbReference type="Proteomes" id="UP000001479">
    <property type="component" value="Chromosome"/>
</dbReference>
<dbReference type="CDD" id="cd00885">
    <property type="entry name" value="cinA"/>
    <property type="match status" value="1"/>
</dbReference>
<dbReference type="Gene3D" id="3.40.980.10">
    <property type="entry name" value="MoaB/Mog-like domain"/>
    <property type="match status" value="1"/>
</dbReference>
<dbReference type="HAMAP" id="MF_00226_A">
    <property type="entry name" value="CinA_A"/>
    <property type="match status" value="1"/>
</dbReference>
<dbReference type="InterPro" id="IPR050101">
    <property type="entry name" value="CinA"/>
</dbReference>
<dbReference type="InterPro" id="IPR023055">
    <property type="entry name" value="CinA_Arc"/>
</dbReference>
<dbReference type="InterPro" id="IPR036425">
    <property type="entry name" value="MoaB/Mog-like_dom_sf"/>
</dbReference>
<dbReference type="InterPro" id="IPR001453">
    <property type="entry name" value="MoaB/Mog_dom"/>
</dbReference>
<dbReference type="NCBIfam" id="NF002291">
    <property type="entry name" value="PRK01215.1"/>
    <property type="match status" value="1"/>
</dbReference>
<dbReference type="PANTHER" id="PTHR13939">
    <property type="entry name" value="NICOTINAMIDE-NUCLEOTIDE AMIDOHYDROLASE PNCC"/>
    <property type="match status" value="1"/>
</dbReference>
<dbReference type="PANTHER" id="PTHR13939:SF0">
    <property type="entry name" value="NMN AMIDOHYDROLASE-LIKE PROTEIN YFAY"/>
    <property type="match status" value="1"/>
</dbReference>
<dbReference type="Pfam" id="PF00994">
    <property type="entry name" value="MoCF_biosynth"/>
    <property type="match status" value="1"/>
</dbReference>
<dbReference type="SMART" id="SM00852">
    <property type="entry name" value="MoCF_biosynth"/>
    <property type="match status" value="1"/>
</dbReference>
<dbReference type="SUPFAM" id="SSF53218">
    <property type="entry name" value="Molybdenum cofactor biosynthesis proteins"/>
    <property type="match status" value="1"/>
</dbReference>
<reference key="1">
    <citation type="journal article" date="2009" name="Proc. Natl. Acad. Sci. U.S.A.">
        <title>Biogeography of the Sulfolobus islandicus pan-genome.</title>
        <authorList>
            <person name="Reno M.L."/>
            <person name="Held N.L."/>
            <person name="Fields C.J."/>
            <person name="Burke P.V."/>
            <person name="Whitaker R.J."/>
        </authorList>
    </citation>
    <scope>NUCLEOTIDE SEQUENCE [LARGE SCALE GENOMIC DNA]</scope>
    <source>
        <strain>M.16.4 / Kamchatka #3</strain>
    </source>
</reference>
<feature type="chain" id="PRO_1000204332" description="Protein M164_2028">
    <location>
        <begin position="1"/>
        <end position="263"/>
    </location>
</feature>
<gene>
    <name type="ordered locus">M164_2028</name>
</gene>
<evidence type="ECO:0000255" key="1">
    <source>
        <dbReference type="HAMAP-Rule" id="MF_00226"/>
    </source>
</evidence>
<comment type="similarity">
    <text evidence="1">Belongs to the CinA family.</text>
</comment>
<sequence>MDYWFAEIVTIGNEVLSGKTVNTNASHIGRRLTSLGFTVRRITVVMDDIDEIVSAFREAIDRKPKVIVSSGGLGPTWDDKTAEGLAKALGVNLELNKTAFDMILEKYTKRNIPLTEERKKMAYLPYGAMAVENNEGIAPGIYIYHNNIDILATPGVPREMENVLENFINKMLRNKPNLKYLEDFIYVENVMESALAPYVKELVKKYDIYIKTHPKSYELLRPILEIQIAGSGREEEIKVKIEKVKNELLDAIKKLNGIIRNSL</sequence>